<reference key="1">
    <citation type="journal article" date="2003" name="Nucleic Acids Res.">
        <title>The complete genome sequence and analysis of Corynebacterium diphtheriae NCTC13129.</title>
        <authorList>
            <person name="Cerdeno-Tarraga A.-M."/>
            <person name="Efstratiou A."/>
            <person name="Dover L.G."/>
            <person name="Holden M.T.G."/>
            <person name="Pallen M.J."/>
            <person name="Bentley S.D."/>
            <person name="Besra G.S."/>
            <person name="Churcher C.M."/>
            <person name="James K.D."/>
            <person name="De Zoysa A."/>
            <person name="Chillingworth T."/>
            <person name="Cronin A."/>
            <person name="Dowd L."/>
            <person name="Feltwell T."/>
            <person name="Hamlin N."/>
            <person name="Holroyd S."/>
            <person name="Jagels K."/>
            <person name="Moule S."/>
            <person name="Quail M.A."/>
            <person name="Rabbinowitsch E."/>
            <person name="Rutherford K.M."/>
            <person name="Thomson N.R."/>
            <person name="Unwin L."/>
            <person name="Whitehead S."/>
            <person name="Barrell B.G."/>
            <person name="Parkhill J."/>
        </authorList>
    </citation>
    <scope>NUCLEOTIDE SEQUENCE [LARGE SCALE GENOMIC DNA]</scope>
    <source>
        <strain>ATCC 700971 / NCTC 13129 / Biotype gravis</strain>
    </source>
</reference>
<dbReference type="EC" id="6.3.5.5" evidence="1"/>
<dbReference type="EMBL" id="BX248357">
    <property type="protein sequence ID" value="CAE49860.1"/>
    <property type="molecule type" value="Genomic_DNA"/>
</dbReference>
<dbReference type="RefSeq" id="WP_003851644.1">
    <property type="nucleotide sequence ID" value="NC_002935.2"/>
</dbReference>
<dbReference type="SMR" id="Q6NH15"/>
<dbReference type="STRING" id="257309.DIP1332"/>
<dbReference type="KEGG" id="cdi:DIP1332"/>
<dbReference type="HOGENOM" id="CLU_035901_2_1_11"/>
<dbReference type="UniPathway" id="UPA00068">
    <property type="reaction ID" value="UER00171"/>
</dbReference>
<dbReference type="UniPathway" id="UPA00070">
    <property type="reaction ID" value="UER00115"/>
</dbReference>
<dbReference type="Proteomes" id="UP000002198">
    <property type="component" value="Chromosome"/>
</dbReference>
<dbReference type="GO" id="GO:0005524">
    <property type="term" value="F:ATP binding"/>
    <property type="evidence" value="ECO:0007669"/>
    <property type="project" value="UniProtKB-UniRule"/>
</dbReference>
<dbReference type="GO" id="GO:0004088">
    <property type="term" value="F:carbamoyl-phosphate synthase (glutamine-hydrolyzing) activity"/>
    <property type="evidence" value="ECO:0007669"/>
    <property type="project" value="UniProtKB-UniRule"/>
</dbReference>
<dbReference type="GO" id="GO:0004359">
    <property type="term" value="F:glutaminase activity"/>
    <property type="evidence" value="ECO:0007669"/>
    <property type="project" value="RHEA"/>
</dbReference>
<dbReference type="GO" id="GO:0006207">
    <property type="term" value="P:'de novo' pyrimidine nucleobase biosynthetic process"/>
    <property type="evidence" value="ECO:0007669"/>
    <property type="project" value="InterPro"/>
</dbReference>
<dbReference type="GO" id="GO:0044205">
    <property type="term" value="P:'de novo' UMP biosynthetic process"/>
    <property type="evidence" value="ECO:0007669"/>
    <property type="project" value="UniProtKB-UniRule"/>
</dbReference>
<dbReference type="GO" id="GO:0006541">
    <property type="term" value="P:glutamine metabolic process"/>
    <property type="evidence" value="ECO:0007669"/>
    <property type="project" value="InterPro"/>
</dbReference>
<dbReference type="GO" id="GO:0006526">
    <property type="term" value="P:L-arginine biosynthetic process"/>
    <property type="evidence" value="ECO:0007669"/>
    <property type="project" value="UniProtKB-UniRule"/>
</dbReference>
<dbReference type="CDD" id="cd01744">
    <property type="entry name" value="GATase1_CPSase"/>
    <property type="match status" value="1"/>
</dbReference>
<dbReference type="FunFam" id="3.50.30.20:FF:000001">
    <property type="entry name" value="Carbamoyl-phosphate synthase small chain"/>
    <property type="match status" value="1"/>
</dbReference>
<dbReference type="Gene3D" id="3.40.50.880">
    <property type="match status" value="1"/>
</dbReference>
<dbReference type="Gene3D" id="3.50.30.20">
    <property type="entry name" value="Carbamoyl-phosphate synthase small subunit, N-terminal domain"/>
    <property type="match status" value="1"/>
</dbReference>
<dbReference type="HAMAP" id="MF_01209">
    <property type="entry name" value="CPSase_S_chain"/>
    <property type="match status" value="1"/>
</dbReference>
<dbReference type="InterPro" id="IPR050472">
    <property type="entry name" value="Anth_synth/Amidotransfase"/>
</dbReference>
<dbReference type="InterPro" id="IPR006274">
    <property type="entry name" value="CarbamoylP_synth_ssu"/>
</dbReference>
<dbReference type="InterPro" id="IPR002474">
    <property type="entry name" value="CarbamoylP_synth_ssu_N"/>
</dbReference>
<dbReference type="InterPro" id="IPR036480">
    <property type="entry name" value="CarbP_synth_ssu_N_sf"/>
</dbReference>
<dbReference type="InterPro" id="IPR029062">
    <property type="entry name" value="Class_I_gatase-like"/>
</dbReference>
<dbReference type="InterPro" id="IPR035686">
    <property type="entry name" value="CPSase_GATase1"/>
</dbReference>
<dbReference type="InterPro" id="IPR017926">
    <property type="entry name" value="GATASE"/>
</dbReference>
<dbReference type="NCBIfam" id="TIGR01368">
    <property type="entry name" value="CPSaseIIsmall"/>
    <property type="match status" value="1"/>
</dbReference>
<dbReference type="NCBIfam" id="NF009475">
    <property type="entry name" value="PRK12838.1"/>
    <property type="match status" value="1"/>
</dbReference>
<dbReference type="PANTHER" id="PTHR43418:SF7">
    <property type="entry name" value="CARBAMOYL-PHOSPHATE SYNTHASE SMALL CHAIN"/>
    <property type="match status" value="1"/>
</dbReference>
<dbReference type="PANTHER" id="PTHR43418">
    <property type="entry name" value="MULTIFUNCTIONAL TRYPTOPHAN BIOSYNTHESIS PROTEIN-RELATED"/>
    <property type="match status" value="1"/>
</dbReference>
<dbReference type="Pfam" id="PF00988">
    <property type="entry name" value="CPSase_sm_chain"/>
    <property type="match status" value="1"/>
</dbReference>
<dbReference type="Pfam" id="PF00117">
    <property type="entry name" value="GATase"/>
    <property type="match status" value="1"/>
</dbReference>
<dbReference type="PRINTS" id="PR00097">
    <property type="entry name" value="ANTSNTHASEII"/>
</dbReference>
<dbReference type="PRINTS" id="PR00099">
    <property type="entry name" value="CPSGATASE"/>
</dbReference>
<dbReference type="PRINTS" id="PR00096">
    <property type="entry name" value="GATASE"/>
</dbReference>
<dbReference type="SMART" id="SM01097">
    <property type="entry name" value="CPSase_sm_chain"/>
    <property type="match status" value="1"/>
</dbReference>
<dbReference type="SUPFAM" id="SSF52021">
    <property type="entry name" value="Carbamoyl phosphate synthetase, small subunit N-terminal domain"/>
    <property type="match status" value="1"/>
</dbReference>
<dbReference type="SUPFAM" id="SSF52317">
    <property type="entry name" value="Class I glutamine amidotransferase-like"/>
    <property type="match status" value="1"/>
</dbReference>
<dbReference type="PROSITE" id="PS51273">
    <property type="entry name" value="GATASE_TYPE_1"/>
    <property type="match status" value="1"/>
</dbReference>
<comment type="function">
    <text evidence="1">Small subunit of the glutamine-dependent carbamoyl phosphate synthetase (CPSase). CPSase catalyzes the formation of carbamoyl phosphate from the ammonia moiety of glutamine, carbonate, and phosphate donated by ATP, constituting the first step of 2 biosynthetic pathways, one leading to arginine and/or urea and the other to pyrimidine nucleotides. The small subunit (glutamine amidotransferase) binds and cleaves glutamine to supply the large subunit with the substrate ammonia.</text>
</comment>
<comment type="catalytic activity">
    <reaction evidence="1">
        <text>hydrogencarbonate + L-glutamine + 2 ATP + H2O = carbamoyl phosphate + L-glutamate + 2 ADP + phosphate + 2 H(+)</text>
        <dbReference type="Rhea" id="RHEA:18633"/>
        <dbReference type="ChEBI" id="CHEBI:15377"/>
        <dbReference type="ChEBI" id="CHEBI:15378"/>
        <dbReference type="ChEBI" id="CHEBI:17544"/>
        <dbReference type="ChEBI" id="CHEBI:29985"/>
        <dbReference type="ChEBI" id="CHEBI:30616"/>
        <dbReference type="ChEBI" id="CHEBI:43474"/>
        <dbReference type="ChEBI" id="CHEBI:58228"/>
        <dbReference type="ChEBI" id="CHEBI:58359"/>
        <dbReference type="ChEBI" id="CHEBI:456216"/>
        <dbReference type="EC" id="6.3.5.5"/>
    </reaction>
</comment>
<comment type="catalytic activity">
    <molecule>Carbamoyl phosphate synthase small chain</molecule>
    <reaction evidence="1">
        <text>L-glutamine + H2O = L-glutamate + NH4(+)</text>
        <dbReference type="Rhea" id="RHEA:15889"/>
        <dbReference type="ChEBI" id="CHEBI:15377"/>
        <dbReference type="ChEBI" id="CHEBI:28938"/>
        <dbReference type="ChEBI" id="CHEBI:29985"/>
        <dbReference type="ChEBI" id="CHEBI:58359"/>
    </reaction>
</comment>
<comment type="pathway">
    <text evidence="1">Amino-acid biosynthesis; L-arginine biosynthesis; carbamoyl phosphate from bicarbonate: step 1/1.</text>
</comment>
<comment type="pathway">
    <text evidence="1">Pyrimidine metabolism; UMP biosynthesis via de novo pathway; (S)-dihydroorotate from bicarbonate: step 1/3.</text>
</comment>
<comment type="subunit">
    <text evidence="1">Composed of two chains; the small (or glutamine) chain promotes the hydrolysis of glutamine to ammonia, which is used by the large (or ammonia) chain to synthesize carbamoyl phosphate. Tetramer of heterodimers (alpha,beta)4.</text>
</comment>
<comment type="similarity">
    <text evidence="1">Belongs to the CarA family.</text>
</comment>
<evidence type="ECO:0000255" key="1">
    <source>
        <dbReference type="HAMAP-Rule" id="MF_01209"/>
    </source>
</evidence>
<organism>
    <name type="scientific">Corynebacterium diphtheriae (strain ATCC 700971 / NCTC 13129 / Biotype gravis)</name>
    <dbReference type="NCBI Taxonomy" id="257309"/>
    <lineage>
        <taxon>Bacteria</taxon>
        <taxon>Bacillati</taxon>
        <taxon>Actinomycetota</taxon>
        <taxon>Actinomycetes</taxon>
        <taxon>Mycobacteriales</taxon>
        <taxon>Corynebacteriaceae</taxon>
        <taxon>Corynebacterium</taxon>
    </lineage>
</organism>
<feature type="chain" id="PRO_0000112269" description="Carbamoyl phosphate synthase small chain">
    <location>
        <begin position="1"/>
        <end position="379"/>
    </location>
</feature>
<feature type="domain" description="Glutamine amidotransferase type-1" evidence="1">
    <location>
        <begin position="185"/>
        <end position="379"/>
    </location>
</feature>
<feature type="region of interest" description="CPSase" evidence="1">
    <location>
        <begin position="1"/>
        <end position="183"/>
    </location>
</feature>
<feature type="active site" description="Nucleophile" evidence="1">
    <location>
        <position position="263"/>
    </location>
</feature>
<feature type="active site" evidence="1">
    <location>
        <position position="353"/>
    </location>
</feature>
<feature type="active site" evidence="1">
    <location>
        <position position="355"/>
    </location>
</feature>
<feature type="binding site" evidence="1">
    <location>
        <position position="51"/>
    </location>
    <ligand>
        <name>L-glutamine</name>
        <dbReference type="ChEBI" id="CHEBI:58359"/>
    </ligand>
</feature>
<feature type="binding site" evidence="1">
    <location>
        <position position="235"/>
    </location>
    <ligand>
        <name>L-glutamine</name>
        <dbReference type="ChEBI" id="CHEBI:58359"/>
    </ligand>
</feature>
<feature type="binding site" evidence="1">
    <location>
        <position position="237"/>
    </location>
    <ligand>
        <name>L-glutamine</name>
        <dbReference type="ChEBI" id="CHEBI:58359"/>
    </ligand>
</feature>
<feature type="binding site" evidence="1">
    <location>
        <position position="264"/>
    </location>
    <ligand>
        <name>L-glutamine</name>
        <dbReference type="ChEBI" id="CHEBI:58359"/>
    </ligand>
</feature>
<feature type="binding site" evidence="1">
    <location>
        <position position="267"/>
    </location>
    <ligand>
        <name>L-glutamine</name>
        <dbReference type="ChEBI" id="CHEBI:58359"/>
    </ligand>
</feature>
<feature type="binding site" evidence="1">
    <location>
        <position position="305"/>
    </location>
    <ligand>
        <name>L-glutamine</name>
        <dbReference type="ChEBI" id="CHEBI:58359"/>
    </ligand>
</feature>
<feature type="binding site" evidence="1">
    <location>
        <position position="307"/>
    </location>
    <ligand>
        <name>L-glutamine</name>
        <dbReference type="ChEBI" id="CHEBI:58359"/>
    </ligand>
</feature>
<feature type="binding site" evidence="1">
    <location>
        <position position="308"/>
    </location>
    <ligand>
        <name>L-glutamine</name>
        <dbReference type="ChEBI" id="CHEBI:58359"/>
    </ligand>
</feature>
<name>CARA_CORDI</name>
<protein>
    <recommendedName>
        <fullName evidence="1">Carbamoyl phosphate synthase small chain</fullName>
        <ecNumber evidence="1">6.3.5.5</ecNumber>
    </recommendedName>
    <alternativeName>
        <fullName evidence="1">Carbamoyl phosphate synthetase glutamine chain</fullName>
    </alternativeName>
</protein>
<sequence>MTSQDRSEAVLVLADGRIFKGESFGAEGATLGEAVFTTAMSGYQETMTDPSYHRQIVVATAPQIGNTGWNDEDGESHGDKIWVAGLVIRDLSTAVSNWRAKRSLEDEMREQNIVGISGVDTRAIVRHLRNFGSVAAGIFSGEAAKQPHDELIEIVKSQPSMAGADLASEVSTQEAYVVEPDGEALYTVVAYDMGIKTNTPRNFSRRGIRTVVVPANTPAEDIAQYNPDGVFVSNGPGDPATADVMVGIVQEILAQKIPFFGICFGNQILGRALGMNTYKMKFGHRGINVPVLNHLTGKIDITAQNHGFALEGTALEQFDTPFGPAHVTHTCLNDDTVEGVALVNGLAYSVQYHPEAAAGPHDANPLFDQFVELIQANKK</sequence>
<keyword id="KW-0028">Amino-acid biosynthesis</keyword>
<keyword id="KW-0055">Arginine biosynthesis</keyword>
<keyword id="KW-0067">ATP-binding</keyword>
<keyword id="KW-0315">Glutamine amidotransferase</keyword>
<keyword id="KW-0436">Ligase</keyword>
<keyword id="KW-0547">Nucleotide-binding</keyword>
<keyword id="KW-0665">Pyrimidine biosynthesis</keyword>
<keyword id="KW-1185">Reference proteome</keyword>
<accession>Q6NH15</accession>
<proteinExistence type="inferred from homology"/>
<gene>
    <name evidence="1" type="primary">carA</name>
    <name type="ordered locus">DIP1332</name>
</gene>